<name>Y1931_MYXXD</name>
<gene>
    <name type="ordered locus">MXAN_1931</name>
</gene>
<reference key="1">
    <citation type="journal article" date="2006" name="Proc. Natl. Acad. Sci. U.S.A.">
        <title>Evolution of sensory complexity recorded in a myxobacterial genome.</title>
        <authorList>
            <person name="Goldman B.S."/>
            <person name="Nierman W.C."/>
            <person name="Kaiser D."/>
            <person name="Slater S.C."/>
            <person name="Durkin A.S."/>
            <person name="Eisen J.A."/>
            <person name="Ronning C.M."/>
            <person name="Barbazuk W.B."/>
            <person name="Blanchard M."/>
            <person name="Field C."/>
            <person name="Halling C."/>
            <person name="Hinkle G."/>
            <person name="Iartchuk O."/>
            <person name="Kim H.S."/>
            <person name="Mackenzie C."/>
            <person name="Madupu R."/>
            <person name="Miller N."/>
            <person name="Shvartsbeyn A."/>
            <person name="Sullivan S.A."/>
            <person name="Vaudin M."/>
            <person name="Wiegand R."/>
            <person name="Kaplan H.B."/>
        </authorList>
    </citation>
    <scope>NUCLEOTIDE SEQUENCE [LARGE SCALE GENOMIC DNA]</scope>
    <source>
        <strain>DK1622</strain>
    </source>
</reference>
<feature type="chain" id="PRO_1000003781" description="Nucleoid-associated protein MXAN_1931">
    <location>
        <begin position="1"/>
        <end position="105"/>
    </location>
</feature>
<organism>
    <name type="scientific">Myxococcus xanthus (strain DK1622)</name>
    <dbReference type="NCBI Taxonomy" id="246197"/>
    <lineage>
        <taxon>Bacteria</taxon>
        <taxon>Pseudomonadati</taxon>
        <taxon>Myxococcota</taxon>
        <taxon>Myxococcia</taxon>
        <taxon>Myxococcales</taxon>
        <taxon>Cystobacterineae</taxon>
        <taxon>Myxococcaceae</taxon>
        <taxon>Myxococcus</taxon>
    </lineage>
</organism>
<sequence length="105" mass="11445">MPGVDLNYFIRQANKLTEKIEERKQQLAEESVEAKAGDGRVTVVANGIQEIRSIKIDKEAIDPNDTSMLEDLITAAVNAALASSRQHMQRELAKISGGVKIPGIT</sequence>
<keyword id="KW-0963">Cytoplasm</keyword>
<keyword id="KW-0238">DNA-binding</keyword>
<keyword id="KW-1185">Reference proteome</keyword>
<evidence type="ECO:0000255" key="1">
    <source>
        <dbReference type="HAMAP-Rule" id="MF_00274"/>
    </source>
</evidence>
<protein>
    <recommendedName>
        <fullName evidence="1">Nucleoid-associated protein MXAN_1931</fullName>
    </recommendedName>
</protein>
<dbReference type="EMBL" id="CP000113">
    <property type="protein sequence ID" value="ABF86648.1"/>
    <property type="molecule type" value="Genomic_DNA"/>
</dbReference>
<dbReference type="RefSeq" id="WP_011552030.1">
    <property type="nucleotide sequence ID" value="NC_008095.1"/>
</dbReference>
<dbReference type="SMR" id="Q1DAZ8"/>
<dbReference type="STRING" id="246197.MXAN_1931"/>
<dbReference type="EnsemblBacteria" id="ABF86648">
    <property type="protein sequence ID" value="ABF86648"/>
    <property type="gene ID" value="MXAN_1931"/>
</dbReference>
<dbReference type="GeneID" id="41359345"/>
<dbReference type="KEGG" id="mxa:MXAN_1931"/>
<dbReference type="eggNOG" id="COG0718">
    <property type="taxonomic scope" value="Bacteria"/>
</dbReference>
<dbReference type="HOGENOM" id="CLU_140930_1_1_7"/>
<dbReference type="OrthoDB" id="9803080at2"/>
<dbReference type="Proteomes" id="UP000002402">
    <property type="component" value="Chromosome"/>
</dbReference>
<dbReference type="GO" id="GO:0043590">
    <property type="term" value="C:bacterial nucleoid"/>
    <property type="evidence" value="ECO:0007669"/>
    <property type="project" value="UniProtKB-UniRule"/>
</dbReference>
<dbReference type="GO" id="GO:0005829">
    <property type="term" value="C:cytosol"/>
    <property type="evidence" value="ECO:0007669"/>
    <property type="project" value="TreeGrafter"/>
</dbReference>
<dbReference type="GO" id="GO:0003677">
    <property type="term" value="F:DNA binding"/>
    <property type="evidence" value="ECO:0007669"/>
    <property type="project" value="UniProtKB-UniRule"/>
</dbReference>
<dbReference type="Gene3D" id="3.30.1310.10">
    <property type="entry name" value="Nucleoid-associated protein YbaB-like domain"/>
    <property type="match status" value="1"/>
</dbReference>
<dbReference type="HAMAP" id="MF_00274">
    <property type="entry name" value="DNA_YbaB_EbfC"/>
    <property type="match status" value="1"/>
</dbReference>
<dbReference type="InterPro" id="IPR036894">
    <property type="entry name" value="YbaB-like_sf"/>
</dbReference>
<dbReference type="InterPro" id="IPR004401">
    <property type="entry name" value="YbaB/EbfC"/>
</dbReference>
<dbReference type="NCBIfam" id="TIGR00103">
    <property type="entry name" value="DNA_YbaB_EbfC"/>
    <property type="match status" value="1"/>
</dbReference>
<dbReference type="PANTHER" id="PTHR33449">
    <property type="entry name" value="NUCLEOID-ASSOCIATED PROTEIN YBAB"/>
    <property type="match status" value="1"/>
</dbReference>
<dbReference type="PANTHER" id="PTHR33449:SF1">
    <property type="entry name" value="NUCLEOID-ASSOCIATED PROTEIN YBAB"/>
    <property type="match status" value="1"/>
</dbReference>
<dbReference type="Pfam" id="PF02575">
    <property type="entry name" value="YbaB_DNA_bd"/>
    <property type="match status" value="1"/>
</dbReference>
<dbReference type="PIRSF" id="PIRSF004555">
    <property type="entry name" value="UCP004555"/>
    <property type="match status" value="1"/>
</dbReference>
<dbReference type="SUPFAM" id="SSF82607">
    <property type="entry name" value="YbaB-like"/>
    <property type="match status" value="1"/>
</dbReference>
<comment type="function">
    <text evidence="1">Binds to DNA and alters its conformation. May be involved in regulation of gene expression, nucleoid organization and DNA protection.</text>
</comment>
<comment type="subunit">
    <text evidence="1">Homodimer.</text>
</comment>
<comment type="subcellular location">
    <subcellularLocation>
        <location evidence="1">Cytoplasm</location>
        <location evidence="1">Nucleoid</location>
    </subcellularLocation>
</comment>
<comment type="similarity">
    <text evidence="1">Belongs to the YbaB/EbfC family.</text>
</comment>
<accession>Q1DAZ8</accession>
<proteinExistence type="inferred from homology"/>